<gene>
    <name evidence="1" type="primary">argR</name>
    <name type="ordered locus">Helmi_04650</name>
    <name type="ORF">HM1_0300</name>
</gene>
<dbReference type="EMBL" id="CP000930">
    <property type="protein sequence ID" value="ABZ82919.1"/>
    <property type="molecule type" value="Genomic_DNA"/>
</dbReference>
<dbReference type="RefSeq" id="WP_012281633.1">
    <property type="nucleotide sequence ID" value="NC_010337.2"/>
</dbReference>
<dbReference type="SMR" id="B0TEK0"/>
<dbReference type="STRING" id="498761.HM1_0300"/>
<dbReference type="KEGG" id="hmo:HM1_0300"/>
<dbReference type="eggNOG" id="COG1438">
    <property type="taxonomic scope" value="Bacteria"/>
</dbReference>
<dbReference type="HOGENOM" id="CLU_097103_3_0_9"/>
<dbReference type="OrthoDB" id="9807089at2"/>
<dbReference type="UniPathway" id="UPA00068"/>
<dbReference type="Proteomes" id="UP000008550">
    <property type="component" value="Chromosome"/>
</dbReference>
<dbReference type="GO" id="GO:0005737">
    <property type="term" value="C:cytoplasm"/>
    <property type="evidence" value="ECO:0007669"/>
    <property type="project" value="UniProtKB-SubCell"/>
</dbReference>
<dbReference type="GO" id="GO:0034618">
    <property type="term" value="F:arginine binding"/>
    <property type="evidence" value="ECO:0007669"/>
    <property type="project" value="InterPro"/>
</dbReference>
<dbReference type="GO" id="GO:0003677">
    <property type="term" value="F:DNA binding"/>
    <property type="evidence" value="ECO:0007669"/>
    <property type="project" value="UniProtKB-KW"/>
</dbReference>
<dbReference type="GO" id="GO:0003700">
    <property type="term" value="F:DNA-binding transcription factor activity"/>
    <property type="evidence" value="ECO:0007669"/>
    <property type="project" value="UniProtKB-UniRule"/>
</dbReference>
<dbReference type="GO" id="GO:0006526">
    <property type="term" value="P:L-arginine biosynthetic process"/>
    <property type="evidence" value="ECO:0007669"/>
    <property type="project" value="UniProtKB-UniPathway"/>
</dbReference>
<dbReference type="GO" id="GO:0051259">
    <property type="term" value="P:protein complex oligomerization"/>
    <property type="evidence" value="ECO:0007669"/>
    <property type="project" value="InterPro"/>
</dbReference>
<dbReference type="GO" id="GO:1900079">
    <property type="term" value="P:regulation of arginine biosynthetic process"/>
    <property type="evidence" value="ECO:0007669"/>
    <property type="project" value="UniProtKB-UniRule"/>
</dbReference>
<dbReference type="Gene3D" id="3.30.1360.40">
    <property type="match status" value="1"/>
</dbReference>
<dbReference type="Gene3D" id="1.10.10.10">
    <property type="entry name" value="Winged helix-like DNA-binding domain superfamily/Winged helix DNA-binding domain"/>
    <property type="match status" value="1"/>
</dbReference>
<dbReference type="HAMAP" id="MF_00173">
    <property type="entry name" value="Arg_repressor"/>
    <property type="match status" value="1"/>
</dbReference>
<dbReference type="InterPro" id="IPR001669">
    <property type="entry name" value="Arg_repress"/>
</dbReference>
<dbReference type="InterPro" id="IPR020899">
    <property type="entry name" value="Arg_repress_C"/>
</dbReference>
<dbReference type="InterPro" id="IPR036251">
    <property type="entry name" value="Arg_repress_C_sf"/>
</dbReference>
<dbReference type="InterPro" id="IPR020900">
    <property type="entry name" value="Arg_repress_DNA-bd"/>
</dbReference>
<dbReference type="InterPro" id="IPR036388">
    <property type="entry name" value="WH-like_DNA-bd_sf"/>
</dbReference>
<dbReference type="InterPro" id="IPR036390">
    <property type="entry name" value="WH_DNA-bd_sf"/>
</dbReference>
<dbReference type="NCBIfam" id="TIGR01529">
    <property type="entry name" value="argR_whole"/>
    <property type="match status" value="1"/>
</dbReference>
<dbReference type="PANTHER" id="PTHR34471">
    <property type="entry name" value="ARGININE REPRESSOR"/>
    <property type="match status" value="1"/>
</dbReference>
<dbReference type="PANTHER" id="PTHR34471:SF1">
    <property type="entry name" value="ARGININE REPRESSOR"/>
    <property type="match status" value="1"/>
</dbReference>
<dbReference type="Pfam" id="PF01316">
    <property type="entry name" value="Arg_repressor"/>
    <property type="match status" value="1"/>
</dbReference>
<dbReference type="Pfam" id="PF02863">
    <property type="entry name" value="Arg_repressor_C"/>
    <property type="match status" value="1"/>
</dbReference>
<dbReference type="PRINTS" id="PR01467">
    <property type="entry name" value="ARGREPRESSOR"/>
</dbReference>
<dbReference type="SUPFAM" id="SSF55252">
    <property type="entry name" value="C-terminal domain of arginine repressor"/>
    <property type="match status" value="1"/>
</dbReference>
<dbReference type="SUPFAM" id="SSF46785">
    <property type="entry name" value="Winged helix' DNA-binding domain"/>
    <property type="match status" value="1"/>
</dbReference>
<protein>
    <recommendedName>
        <fullName evidence="1">Arginine repressor</fullName>
    </recommendedName>
</protein>
<name>ARGR_HELMI</name>
<proteinExistence type="inferred from homology"/>
<evidence type="ECO:0000255" key="1">
    <source>
        <dbReference type="HAMAP-Rule" id="MF_00173"/>
    </source>
</evidence>
<organism>
    <name type="scientific">Heliobacterium modesticaldum (strain ATCC 51547 / Ice1)</name>
    <dbReference type="NCBI Taxonomy" id="498761"/>
    <lineage>
        <taxon>Bacteria</taxon>
        <taxon>Bacillati</taxon>
        <taxon>Bacillota</taxon>
        <taxon>Clostridia</taxon>
        <taxon>Eubacteriales</taxon>
        <taxon>Heliobacteriaceae</taxon>
        <taxon>Heliomicrobium</taxon>
    </lineage>
</organism>
<keyword id="KW-0028">Amino-acid biosynthesis</keyword>
<keyword id="KW-0055">Arginine biosynthesis</keyword>
<keyword id="KW-0963">Cytoplasm</keyword>
<keyword id="KW-0238">DNA-binding</keyword>
<keyword id="KW-1185">Reference proteome</keyword>
<keyword id="KW-0678">Repressor</keyword>
<keyword id="KW-0804">Transcription</keyword>
<keyword id="KW-0805">Transcription regulation</keyword>
<feature type="chain" id="PRO_1000097874" description="Arginine repressor">
    <location>
        <begin position="1"/>
        <end position="151"/>
    </location>
</feature>
<reference key="1">
    <citation type="journal article" date="2008" name="J. Bacteriol.">
        <title>The genome of Heliobacterium modesticaldum, a phototrophic representative of the Firmicutes containing the simplest photosynthetic apparatus.</title>
        <authorList>
            <person name="Sattley W.M."/>
            <person name="Madigan M.T."/>
            <person name="Swingley W.D."/>
            <person name="Cheung P.C."/>
            <person name="Clocksin K.M."/>
            <person name="Conrad A.L."/>
            <person name="Dejesa L.C."/>
            <person name="Honchak B.M."/>
            <person name="Jung D.O."/>
            <person name="Karbach L.E."/>
            <person name="Kurdoglu A."/>
            <person name="Lahiri S."/>
            <person name="Mastrian S.D."/>
            <person name="Page L.E."/>
            <person name="Taylor H.L."/>
            <person name="Wang Z.T."/>
            <person name="Raymond J."/>
            <person name="Chen M."/>
            <person name="Blankenship R.E."/>
            <person name="Touchman J.W."/>
        </authorList>
    </citation>
    <scope>NUCLEOTIDE SEQUENCE [LARGE SCALE GENOMIC DNA]</scope>
    <source>
        <strain>ATCC 51547 / Ice1</strain>
    </source>
</reference>
<sequence>MKSRRQRAILEIIGAEVVRTQEELAQRLRERGMEVTQATVSRDIKELGLIKVPVSKDESRYAPPAEAAQVPQAQDRLRRLLRDTVTHVDSSLNIVVIRTLPGHAHAVAGAIDHSHWPEVLGTVAGDDTIFIVVKPVEAVEALMDKVRRWVE</sequence>
<comment type="function">
    <text evidence="1">Regulates arginine biosynthesis genes.</text>
</comment>
<comment type="pathway">
    <text>Amino-acid biosynthesis; L-arginine biosynthesis [regulation].</text>
</comment>
<comment type="subcellular location">
    <subcellularLocation>
        <location evidence="1">Cytoplasm</location>
    </subcellularLocation>
</comment>
<comment type="similarity">
    <text evidence="1">Belongs to the ArgR family.</text>
</comment>
<accession>B0TEK0</accession>